<proteinExistence type="evidence at protein level"/>
<dbReference type="EC" id="3.1.4.12" evidence="5 7"/>
<dbReference type="EC" id="3.1.4.3" evidence="1"/>
<dbReference type="EMBL" id="Z14252">
    <property type="protein sequence ID" value="CAA78619.1"/>
    <property type="molecule type" value="mRNA"/>
</dbReference>
<dbReference type="EMBL" id="Z14132">
    <property type="protein sequence ID" value="CAA78506.1"/>
    <property type="molecule type" value="Genomic_DNA"/>
</dbReference>
<dbReference type="EMBL" id="AK088147">
    <property type="protein sequence ID" value="BAC40171.1"/>
    <property type="molecule type" value="mRNA"/>
</dbReference>
<dbReference type="EMBL" id="AK145534">
    <property type="protein sequence ID" value="BAE26489.1"/>
    <property type="molecule type" value="mRNA"/>
</dbReference>
<dbReference type="EMBL" id="AK145702">
    <property type="protein sequence ID" value="BAE26598.1"/>
    <property type="molecule type" value="mRNA"/>
</dbReference>
<dbReference type="EMBL" id="AK164167">
    <property type="protein sequence ID" value="BAE37659.1"/>
    <property type="molecule type" value="mRNA"/>
</dbReference>
<dbReference type="EMBL" id="BC011304">
    <property type="protein sequence ID" value="AAH11304.1"/>
    <property type="molecule type" value="mRNA"/>
</dbReference>
<dbReference type="CCDS" id="CCDS21653.1"/>
<dbReference type="PIR" id="A58720">
    <property type="entry name" value="S27393"/>
</dbReference>
<dbReference type="RefSeq" id="NP_035551.1">
    <property type="nucleotide sequence ID" value="NM_011421.2"/>
</dbReference>
<dbReference type="PDB" id="5FI9">
    <property type="method" value="X-ray"/>
    <property type="resolution" value="2.54 A"/>
    <property type="chains" value="A/B=84-611"/>
</dbReference>
<dbReference type="PDB" id="5FIB">
    <property type="method" value="X-ray"/>
    <property type="resolution" value="2.80 A"/>
    <property type="chains" value="A/B=84-611"/>
</dbReference>
<dbReference type="PDB" id="5FIC">
    <property type="method" value="X-ray"/>
    <property type="resolution" value="2.80 A"/>
    <property type="chains" value="A/B/C/D=84-611"/>
</dbReference>
<dbReference type="PDB" id="5HQN">
    <property type="method" value="X-ray"/>
    <property type="resolution" value="2.60 A"/>
    <property type="chains" value="A/B=165-627"/>
</dbReference>
<dbReference type="PDBsum" id="5FI9"/>
<dbReference type="PDBsum" id="5FIB"/>
<dbReference type="PDBsum" id="5FIC"/>
<dbReference type="PDBsum" id="5HQN"/>
<dbReference type="SMR" id="Q04519"/>
<dbReference type="BioGRID" id="203345">
    <property type="interactions" value="3"/>
</dbReference>
<dbReference type="FunCoup" id="Q04519">
    <property type="interactions" value="804"/>
</dbReference>
<dbReference type="STRING" id="10090.ENSMUSP00000042187"/>
<dbReference type="ChEMBL" id="CHEMBL4295802"/>
<dbReference type="GlyCosmos" id="Q04519">
    <property type="glycosylation" value="6 sites, No reported glycans"/>
</dbReference>
<dbReference type="GlyGen" id="Q04519">
    <property type="glycosylation" value="7 sites, 2 N-linked glycans (3 sites)"/>
</dbReference>
<dbReference type="iPTMnet" id="Q04519"/>
<dbReference type="PhosphoSitePlus" id="Q04519"/>
<dbReference type="SwissPalm" id="Q04519"/>
<dbReference type="PaxDb" id="10090-ENSMUSP00000042187"/>
<dbReference type="PeptideAtlas" id="Q04519"/>
<dbReference type="ProteomicsDB" id="281814"/>
<dbReference type="Antibodypedia" id="1065">
    <property type="antibodies" value="305 antibodies from 31 providers"/>
</dbReference>
<dbReference type="DNASU" id="20597"/>
<dbReference type="Ensembl" id="ENSMUST00000046983.10">
    <property type="protein sequence ID" value="ENSMUSP00000042187.9"/>
    <property type="gene ID" value="ENSMUSG00000037049.10"/>
</dbReference>
<dbReference type="GeneID" id="20597"/>
<dbReference type="KEGG" id="mmu:20597"/>
<dbReference type="UCSC" id="uc009iyf.2">
    <property type="organism name" value="mouse"/>
</dbReference>
<dbReference type="AGR" id="MGI:98325"/>
<dbReference type="CTD" id="6609"/>
<dbReference type="MGI" id="MGI:98325">
    <property type="gene designation" value="Smpd1"/>
</dbReference>
<dbReference type="VEuPathDB" id="HostDB:ENSMUSG00000037049"/>
<dbReference type="eggNOG" id="KOG3770">
    <property type="taxonomic scope" value="Eukaryota"/>
</dbReference>
<dbReference type="GeneTree" id="ENSGT00950000183182"/>
<dbReference type="HOGENOM" id="CLU_014743_3_1_1"/>
<dbReference type="InParanoid" id="Q04519"/>
<dbReference type="OMA" id="VWSQTRK"/>
<dbReference type="OrthoDB" id="282973at2759"/>
<dbReference type="PhylomeDB" id="Q04519"/>
<dbReference type="TreeFam" id="TF313674"/>
<dbReference type="BRENDA" id="3.1.4.12">
    <property type="organism ID" value="3474"/>
</dbReference>
<dbReference type="Reactome" id="R-MMU-9840310">
    <property type="pathway name" value="Glycosphingolipid catabolism"/>
</dbReference>
<dbReference type="BioGRID-ORCS" id="20597">
    <property type="hits" value="10 hits in 80 CRISPR screens"/>
</dbReference>
<dbReference type="ChiTaRS" id="Smpd1">
    <property type="organism name" value="mouse"/>
</dbReference>
<dbReference type="PRO" id="PR:Q04519"/>
<dbReference type="Proteomes" id="UP000000589">
    <property type="component" value="Chromosome 7"/>
</dbReference>
<dbReference type="RNAct" id="Q04519">
    <property type="molecule type" value="protein"/>
</dbReference>
<dbReference type="Bgee" id="ENSMUSG00000037049">
    <property type="expression patterns" value="Expressed in choroid plexus of fourth ventricle and 266 other cell types or tissues"/>
</dbReference>
<dbReference type="GO" id="GO:0036019">
    <property type="term" value="C:endolysosome"/>
    <property type="evidence" value="ECO:0000250"/>
    <property type="project" value="UniProtKB"/>
</dbReference>
<dbReference type="GO" id="GO:0005615">
    <property type="term" value="C:extracellular space"/>
    <property type="evidence" value="ECO:0000314"/>
    <property type="project" value="UniProtKB"/>
</dbReference>
<dbReference type="GO" id="GO:0042599">
    <property type="term" value="C:lamellar body"/>
    <property type="evidence" value="ECO:0007669"/>
    <property type="project" value="Ensembl"/>
</dbReference>
<dbReference type="GO" id="GO:0005811">
    <property type="term" value="C:lipid droplet"/>
    <property type="evidence" value="ECO:0007669"/>
    <property type="project" value="UniProtKB-SubCell"/>
</dbReference>
<dbReference type="GO" id="GO:0005764">
    <property type="term" value="C:lysosome"/>
    <property type="evidence" value="ECO:0000250"/>
    <property type="project" value="UniProtKB"/>
</dbReference>
<dbReference type="GO" id="GO:0005886">
    <property type="term" value="C:plasma membrane"/>
    <property type="evidence" value="ECO:0007669"/>
    <property type="project" value="Ensembl"/>
</dbReference>
<dbReference type="GO" id="GO:0061750">
    <property type="term" value="F:acid sphingomyelin phosphodiesterase activity"/>
    <property type="evidence" value="ECO:0000314"/>
    <property type="project" value="UniProtKB"/>
</dbReference>
<dbReference type="GO" id="GO:0016798">
    <property type="term" value="F:hydrolase activity, acting on glycosyl bonds"/>
    <property type="evidence" value="ECO:0007669"/>
    <property type="project" value="UniProtKB-KW"/>
</dbReference>
<dbReference type="GO" id="GO:0034480">
    <property type="term" value="F:phosphatidylcholine phospholipase C activity"/>
    <property type="evidence" value="ECO:0007669"/>
    <property type="project" value="RHEA"/>
</dbReference>
<dbReference type="GO" id="GO:0008270">
    <property type="term" value="F:zinc ion binding"/>
    <property type="evidence" value="ECO:0000314"/>
    <property type="project" value="UniProtKB"/>
</dbReference>
<dbReference type="GO" id="GO:0071277">
    <property type="term" value="P:cellular response to calcium ion"/>
    <property type="evidence" value="ECO:0000250"/>
    <property type="project" value="UniProtKB"/>
</dbReference>
<dbReference type="GO" id="GO:0034644">
    <property type="term" value="P:cellular response to UV"/>
    <property type="evidence" value="ECO:0000250"/>
    <property type="project" value="UniProtKB"/>
</dbReference>
<dbReference type="GO" id="GO:0046513">
    <property type="term" value="P:ceramide biosynthetic process"/>
    <property type="evidence" value="ECO:0000314"/>
    <property type="project" value="UniProt"/>
</dbReference>
<dbReference type="GO" id="GO:0006672">
    <property type="term" value="P:ceramide metabolic process"/>
    <property type="evidence" value="ECO:0000315"/>
    <property type="project" value="MGI"/>
</dbReference>
<dbReference type="GO" id="GO:0008203">
    <property type="term" value="P:cholesterol metabolic process"/>
    <property type="evidence" value="ECO:0000315"/>
    <property type="project" value="MGI"/>
</dbReference>
<dbReference type="GO" id="GO:0043409">
    <property type="term" value="P:negative regulation of MAPK cascade"/>
    <property type="evidence" value="ECO:0007669"/>
    <property type="project" value="Ensembl"/>
</dbReference>
<dbReference type="GO" id="GO:0001778">
    <property type="term" value="P:plasma membrane repair"/>
    <property type="evidence" value="ECO:0000314"/>
    <property type="project" value="UniProt"/>
</dbReference>
<dbReference type="GO" id="GO:0043065">
    <property type="term" value="P:positive regulation of apoptotic process"/>
    <property type="evidence" value="ECO:0000315"/>
    <property type="project" value="UniProtKB"/>
</dbReference>
<dbReference type="GO" id="GO:0045807">
    <property type="term" value="P:positive regulation of endocytosis"/>
    <property type="evidence" value="ECO:0000250"/>
    <property type="project" value="UniProtKB"/>
</dbReference>
<dbReference type="GO" id="GO:0046598">
    <property type="term" value="P:positive regulation of viral entry into host cell"/>
    <property type="evidence" value="ECO:0007669"/>
    <property type="project" value="Ensembl"/>
</dbReference>
<dbReference type="GO" id="GO:0042220">
    <property type="term" value="P:response to cocaine"/>
    <property type="evidence" value="ECO:0007669"/>
    <property type="project" value="Ensembl"/>
</dbReference>
<dbReference type="GO" id="GO:0070555">
    <property type="term" value="P:response to interleukin-1"/>
    <property type="evidence" value="ECO:0000250"/>
    <property type="project" value="UniProtKB"/>
</dbReference>
<dbReference type="GO" id="GO:0010212">
    <property type="term" value="P:response to ionizing radiation"/>
    <property type="evidence" value="ECO:0000315"/>
    <property type="project" value="UniProtKB"/>
</dbReference>
<dbReference type="GO" id="GO:0034612">
    <property type="term" value="P:response to tumor necrosis factor"/>
    <property type="evidence" value="ECO:0000250"/>
    <property type="project" value="UniProtKB"/>
</dbReference>
<dbReference type="GO" id="GO:0034340">
    <property type="term" value="P:response to type I interferon"/>
    <property type="evidence" value="ECO:0000250"/>
    <property type="project" value="UniProtKB"/>
</dbReference>
<dbReference type="GO" id="GO:0009615">
    <property type="term" value="P:response to virus"/>
    <property type="evidence" value="ECO:0000250"/>
    <property type="project" value="UniProtKB"/>
</dbReference>
<dbReference type="GO" id="GO:0009410">
    <property type="term" value="P:response to xenobiotic stimulus"/>
    <property type="evidence" value="ECO:0007669"/>
    <property type="project" value="Ensembl"/>
</dbReference>
<dbReference type="GO" id="GO:0006685">
    <property type="term" value="P:sphingomyelin catabolic process"/>
    <property type="evidence" value="ECO:0000315"/>
    <property type="project" value="MGI"/>
</dbReference>
<dbReference type="GO" id="GO:0046718">
    <property type="term" value="P:symbiont entry into host cell"/>
    <property type="evidence" value="ECO:0000250"/>
    <property type="project" value="UniProtKB"/>
</dbReference>
<dbReference type="GO" id="GO:0023021">
    <property type="term" value="P:termination of signal transduction"/>
    <property type="evidence" value="ECO:0007669"/>
    <property type="project" value="Ensembl"/>
</dbReference>
<dbReference type="GO" id="GO:0042060">
    <property type="term" value="P:wound healing"/>
    <property type="evidence" value="ECO:0000250"/>
    <property type="project" value="UniProtKB"/>
</dbReference>
<dbReference type="CDD" id="cd00842">
    <property type="entry name" value="MPP_ASMase"/>
    <property type="match status" value="1"/>
</dbReference>
<dbReference type="FunFam" id="3.60.21.10:FF:000045">
    <property type="entry name" value="Sphingomyelin phosphodiesterase"/>
    <property type="match status" value="1"/>
</dbReference>
<dbReference type="Gene3D" id="3.60.21.10">
    <property type="match status" value="1"/>
</dbReference>
<dbReference type="Gene3D" id="1.10.225.10">
    <property type="entry name" value="Saposin-like"/>
    <property type="match status" value="1"/>
</dbReference>
<dbReference type="InterPro" id="IPR045473">
    <property type="entry name" value="ASM_C"/>
</dbReference>
<dbReference type="InterPro" id="IPR041805">
    <property type="entry name" value="ASMase/PPN1_MPP"/>
</dbReference>
<dbReference type="InterPro" id="IPR004843">
    <property type="entry name" value="Calcineurin-like_PHP_ApaH"/>
</dbReference>
<dbReference type="InterPro" id="IPR029052">
    <property type="entry name" value="Metallo-depent_PP-like"/>
</dbReference>
<dbReference type="InterPro" id="IPR011001">
    <property type="entry name" value="Saposin-like"/>
</dbReference>
<dbReference type="InterPro" id="IPR008139">
    <property type="entry name" value="SaposinB_dom"/>
</dbReference>
<dbReference type="InterPro" id="IPR011160">
    <property type="entry name" value="Sphingomy_PDE"/>
</dbReference>
<dbReference type="PANTHER" id="PTHR10340">
    <property type="entry name" value="SPHINGOMYELIN PHOSPHODIESTERASE"/>
    <property type="match status" value="1"/>
</dbReference>
<dbReference type="PANTHER" id="PTHR10340:SF34">
    <property type="entry name" value="SPHINGOMYELIN PHOSPHODIESTERASE"/>
    <property type="match status" value="1"/>
</dbReference>
<dbReference type="Pfam" id="PF19272">
    <property type="entry name" value="ASMase_C"/>
    <property type="match status" value="1"/>
</dbReference>
<dbReference type="Pfam" id="PF00149">
    <property type="entry name" value="Metallophos"/>
    <property type="match status" value="1"/>
</dbReference>
<dbReference type="PIRSF" id="PIRSF000948">
    <property type="entry name" value="Sphingomy_PDE"/>
    <property type="match status" value="1"/>
</dbReference>
<dbReference type="SMART" id="SM00741">
    <property type="entry name" value="SapB"/>
    <property type="match status" value="1"/>
</dbReference>
<dbReference type="SUPFAM" id="SSF56300">
    <property type="entry name" value="Metallo-dependent phosphatases"/>
    <property type="match status" value="1"/>
</dbReference>
<dbReference type="SUPFAM" id="SSF47862">
    <property type="entry name" value="Saposin"/>
    <property type="match status" value="1"/>
</dbReference>
<dbReference type="PROSITE" id="PS50015">
    <property type="entry name" value="SAP_B"/>
    <property type="match status" value="1"/>
</dbReference>
<comment type="function">
    <text evidence="1 8 9">Converts sphingomyelin to ceramide (PubMed:8706124, PubMed:9660788). Exists as two enzymatic forms that arise from alternative trafficking of a single protein precursor, one that is targeted to the endolysosomal compartment, whereas the other is released extracellularly. However, in response to various forms of stress, lysosomal exocytosis may represent a major source of the secretory form (By similarity).</text>
</comment>
<comment type="function">
    <text evidence="5 8">In the lysosomes, converts sphingomyelin to ceramide. Plays an important role in the export of cholesterol from the intraendolysosomal membranes. Also has phospholipase C activities toward 1,2-diacylglycerolphosphocholine and 1,2-diacylglycerolphosphoglycerol (PubMed:27435900). Modulates stress-induced apoptosis through the production of ceramide (PubMed:8706124).</text>
</comment>
<comment type="function">
    <text evidence="1">When secreted, modulates cell signaling with its ability to reorganize the plasma membrane by converting sphingomyelin to ceramide. Secreted form is increased in response to stress and inflammatory mediators such as IL1B, IFNG or TNF as well as upon infection with bacteria and viruses. Produces the release of ceramide in the outer leaflet of the plasma membrane playing a central role in host defense. Ceramide reorganizes these rafts into larger signaling platforms that are required to internalize P.aeruginosa, induce apoptosis and regulate the cytokine response in infected cells. In wounded cells, the lysosomal form is released extracellularly in the presence of Ca(2+) and promotes endocytosis and plasma membrane repair.</text>
</comment>
<comment type="function">
    <molecule>Sphingomyelin phosphodiesterase, processed form</molecule>
    <text evidence="6">This form is generated following cleavage by CASP7 in the extracellular milieu in response to bacterial infection (PubMed:35705808). It shows increased ability to convert sphingomyelin to ceramide and promotes plasma membrane repair. Plasma membrane repair by ceramide counteracts the action of gasdermin-D (GSDMD) perforin (PRF1) pores that are formed in response to bacterial infection (PubMed:35705808).</text>
</comment>
<comment type="function">
    <text evidence="4">(Microbial infection) Secretion is activated by bacteria such as P.aeruginosa, this activation results in the release of ceramide in the outer leaflet of the plasma membrane which facilitates the infection.</text>
</comment>
<comment type="catalytic activity">
    <reaction evidence="5 7 8 9">
        <text>a sphingomyelin + H2O = phosphocholine + an N-acylsphing-4-enine + H(+)</text>
        <dbReference type="Rhea" id="RHEA:19253"/>
        <dbReference type="ChEBI" id="CHEBI:15377"/>
        <dbReference type="ChEBI" id="CHEBI:15378"/>
        <dbReference type="ChEBI" id="CHEBI:17636"/>
        <dbReference type="ChEBI" id="CHEBI:52639"/>
        <dbReference type="ChEBI" id="CHEBI:295975"/>
        <dbReference type="EC" id="3.1.4.12"/>
    </reaction>
    <physiologicalReaction direction="left-to-right" evidence="8 12">
        <dbReference type="Rhea" id="RHEA:19254"/>
    </physiologicalReaction>
</comment>
<comment type="catalytic activity">
    <reaction evidence="1">
        <text>N-(octadecanoyl)-sphing-4-enine-1-phosphocholine + H2O = N-octadecanoylsphing-4-enine + phosphocholine + H(+)</text>
        <dbReference type="Rhea" id="RHEA:54284"/>
        <dbReference type="ChEBI" id="CHEBI:15377"/>
        <dbReference type="ChEBI" id="CHEBI:15378"/>
        <dbReference type="ChEBI" id="CHEBI:72961"/>
        <dbReference type="ChEBI" id="CHEBI:83358"/>
        <dbReference type="ChEBI" id="CHEBI:295975"/>
    </reaction>
    <physiologicalReaction direction="left-to-right" evidence="1">
        <dbReference type="Rhea" id="RHEA:54285"/>
    </physiologicalReaction>
</comment>
<comment type="catalytic activity">
    <reaction evidence="1">
        <text>a 1,2-diacyl-sn-glycero-3-phosphocholine + H2O = phosphocholine + a 1,2-diacyl-sn-glycerol + H(+)</text>
        <dbReference type="Rhea" id="RHEA:10604"/>
        <dbReference type="ChEBI" id="CHEBI:15377"/>
        <dbReference type="ChEBI" id="CHEBI:15378"/>
        <dbReference type="ChEBI" id="CHEBI:17815"/>
        <dbReference type="ChEBI" id="CHEBI:57643"/>
        <dbReference type="ChEBI" id="CHEBI:295975"/>
        <dbReference type="EC" id="3.1.4.3"/>
    </reaction>
    <physiologicalReaction direction="left-to-right" evidence="1">
        <dbReference type="Rhea" id="RHEA:10605"/>
    </physiologicalReaction>
</comment>
<comment type="catalytic activity">
    <reaction evidence="1">
        <text>1,2-dihexadecanoyl-sn-glycero-3-phosphocholine + H2O = 1,2-dihexadecanoyl-sn-glycerol + phosphocholine + H(+)</text>
        <dbReference type="Rhea" id="RHEA:45304"/>
        <dbReference type="ChEBI" id="CHEBI:15377"/>
        <dbReference type="ChEBI" id="CHEBI:15378"/>
        <dbReference type="ChEBI" id="CHEBI:72999"/>
        <dbReference type="ChEBI" id="CHEBI:82929"/>
        <dbReference type="ChEBI" id="CHEBI:295975"/>
    </reaction>
    <physiologicalReaction direction="left-to-right" evidence="1">
        <dbReference type="Rhea" id="RHEA:45305"/>
    </physiologicalReaction>
</comment>
<comment type="catalytic activity">
    <molecule>Sphingomyelin phosphodiesterase, processed form</molecule>
    <reaction evidence="6">
        <text>a sphingomyelin + H2O = phosphocholine + an N-acylsphing-4-enine + H(+)</text>
        <dbReference type="Rhea" id="RHEA:19253"/>
        <dbReference type="ChEBI" id="CHEBI:15377"/>
        <dbReference type="ChEBI" id="CHEBI:15378"/>
        <dbReference type="ChEBI" id="CHEBI:17636"/>
        <dbReference type="ChEBI" id="CHEBI:52639"/>
        <dbReference type="ChEBI" id="CHEBI:295975"/>
        <dbReference type="EC" id="3.1.4.12"/>
    </reaction>
    <physiologicalReaction direction="left-to-right" evidence="13">
        <dbReference type="Rhea" id="RHEA:19254"/>
    </physiologicalReaction>
</comment>
<comment type="cofactor">
    <cofactor evidence="7 9">
        <name>Zn(2+)</name>
        <dbReference type="ChEBI" id="CHEBI:29105"/>
    </cofactor>
    <text>Binds 2 Zn(2+) ions per subunit (PubMed:27435900).</text>
</comment>
<comment type="activity regulation">
    <text evidence="1">Hydrolysis of liposomal sphingomyelin is stimulated by incorporation of diacylglycerol (DAG), ceramide and free fatty acids into the liposomal membranes. Phosphatidylcholine hydrolysis is inhibited by incorporation of cholesterol, ceramide, DAG, monoacylglycerol and fatty acids.</text>
</comment>
<comment type="subunit">
    <text evidence="1 5">Monomer (PubMed:27435900). Interacts with SORT1; the interaction is required for SMPD1 targeting to lysosomes (By similarity).</text>
</comment>
<comment type="subcellular location">
    <subcellularLocation>
        <location evidence="1">Lysosome</location>
    </subcellularLocation>
    <subcellularLocation>
        <location evidence="1">Lipid droplet</location>
    </subcellularLocation>
    <subcellularLocation>
        <location evidence="7">Secreted</location>
    </subcellularLocation>
    <text evidence="1">The secreted form is induced in a time- and dose-dependent by IL1B and TNF as well as stress and viral infection. This increase of the secreted form seems to be due to exocytosis of the lysosomal form and is Ca(2+)-dependent. Secretion is dependent of phosphorylation at Ser-506. Secretion is induced by inflammatory mediators such as IL1B, IFNG or TNF as well as infection with bacteria and viruses.</text>
</comment>
<comment type="subcellular location">
    <molecule>Sphingomyelin phosphodiesterase, processed form</molecule>
    <subcellularLocation>
        <location evidence="6">Secreted</location>
        <location evidence="6">Extracellular space</location>
    </subcellularLocation>
    <text evidence="6">This form is generated following cleavage by CASP7.</text>
</comment>
<comment type="PTM">
    <text evidence="1">Proteolytically processed. Mature lysosomal form arises from C-terminal proteolytic processing of pro-sphingomyelin phosphodiesterase.</text>
</comment>
<comment type="PTM">
    <text evidence="1">Both lysosomal and secreted forms are glycosylated but they show a differential pattern of glycosylation.</text>
</comment>
<comment type="PTM">
    <text evidence="1">Phosphorylated at Ser-506 by PRKCD upon stress stimuli. Phosphorylation is required for secretion.</text>
</comment>
<comment type="PTM">
    <molecule>Sphingomyelin phosphodiesterase, processed form</molecule>
    <text evidence="6">This form is generated following cleavage by CASP7 in the extracellular milieu (PubMed:35705808). It shows increased activity (PubMed:35705808).</text>
</comment>
<comment type="disruption phenotype">
    <text evidence="4 8">Mutants infected with Pseudomonas aeruginosa die within 7 days whereas all wild-type mice survive the infection (PubMed:12563314). Mutants are defective in radiation-induced apoptosis (PubMed:8706124).</text>
</comment>
<comment type="miscellaneous">
    <text>There are two types of sphingomyelinases: ASM (acid), and NSM (neutral).</text>
</comment>
<comment type="similarity">
    <text evidence="11">Belongs to the acid sphingomyelinase family.</text>
</comment>
<name>ASM_MOUSE</name>
<accession>Q04519</accession>
<accession>Q3UL52</accession>
<protein>
    <recommendedName>
        <fullName>Sphingomyelin phosphodiesterase</fullName>
        <ecNumber evidence="5 7">3.1.4.12</ecNumber>
        <ecNumber evidence="1">3.1.4.3</ecNumber>
    </recommendedName>
    <alternativeName>
        <fullName>Acid sphingomyelinase</fullName>
        <shortName>ASMase</shortName>
    </alternativeName>
    <component>
        <recommendedName>
            <fullName evidence="11">Sphingomyelin phosphodiesterase, processed form</fullName>
        </recommendedName>
    </component>
</protein>
<reference key="1">
    <citation type="journal article" date="1992" name="Biol. Chem. Hoppe-Seyler">
        <title>Molecular cloning of the acid sphingomyelinase of the mouse and the organization and complete nucleotide sequence of the gene.</title>
        <authorList>
            <person name="Newrzella D."/>
            <person name="Stoffel W."/>
        </authorList>
    </citation>
    <scope>NUCLEOTIDE SEQUENCE [MRNA]</scope>
    <source>
        <strain>BALB/cJ</strain>
        <tissue>Liver</tissue>
    </source>
</reference>
<reference key="2">
    <citation type="submission" date="1994-04" db="EMBL/GenBank/DDBJ databases">
        <authorList>
            <person name="Hofmann K."/>
        </authorList>
    </citation>
    <scope>SEQUENCE REVISION TO 224-225 AND 384</scope>
</reference>
<reference key="3">
    <citation type="journal article" date="2005" name="Science">
        <title>The transcriptional landscape of the mammalian genome.</title>
        <authorList>
            <person name="Carninci P."/>
            <person name="Kasukawa T."/>
            <person name="Katayama S."/>
            <person name="Gough J."/>
            <person name="Frith M.C."/>
            <person name="Maeda N."/>
            <person name="Oyama R."/>
            <person name="Ravasi T."/>
            <person name="Lenhard B."/>
            <person name="Wells C."/>
            <person name="Kodzius R."/>
            <person name="Shimokawa K."/>
            <person name="Bajic V.B."/>
            <person name="Brenner S.E."/>
            <person name="Batalov S."/>
            <person name="Forrest A.R."/>
            <person name="Zavolan M."/>
            <person name="Davis M.J."/>
            <person name="Wilming L.G."/>
            <person name="Aidinis V."/>
            <person name="Allen J.E."/>
            <person name="Ambesi-Impiombato A."/>
            <person name="Apweiler R."/>
            <person name="Aturaliya R.N."/>
            <person name="Bailey T.L."/>
            <person name="Bansal M."/>
            <person name="Baxter L."/>
            <person name="Beisel K.W."/>
            <person name="Bersano T."/>
            <person name="Bono H."/>
            <person name="Chalk A.M."/>
            <person name="Chiu K.P."/>
            <person name="Choudhary V."/>
            <person name="Christoffels A."/>
            <person name="Clutterbuck D.R."/>
            <person name="Crowe M.L."/>
            <person name="Dalla E."/>
            <person name="Dalrymple B.P."/>
            <person name="de Bono B."/>
            <person name="Della Gatta G."/>
            <person name="di Bernardo D."/>
            <person name="Down T."/>
            <person name="Engstrom P."/>
            <person name="Fagiolini M."/>
            <person name="Faulkner G."/>
            <person name="Fletcher C.F."/>
            <person name="Fukushima T."/>
            <person name="Furuno M."/>
            <person name="Futaki S."/>
            <person name="Gariboldi M."/>
            <person name="Georgii-Hemming P."/>
            <person name="Gingeras T.R."/>
            <person name="Gojobori T."/>
            <person name="Green R.E."/>
            <person name="Gustincich S."/>
            <person name="Harbers M."/>
            <person name="Hayashi Y."/>
            <person name="Hensch T.K."/>
            <person name="Hirokawa N."/>
            <person name="Hill D."/>
            <person name="Huminiecki L."/>
            <person name="Iacono M."/>
            <person name="Ikeo K."/>
            <person name="Iwama A."/>
            <person name="Ishikawa T."/>
            <person name="Jakt M."/>
            <person name="Kanapin A."/>
            <person name="Katoh M."/>
            <person name="Kawasawa Y."/>
            <person name="Kelso J."/>
            <person name="Kitamura H."/>
            <person name="Kitano H."/>
            <person name="Kollias G."/>
            <person name="Krishnan S.P."/>
            <person name="Kruger A."/>
            <person name="Kummerfeld S.K."/>
            <person name="Kurochkin I.V."/>
            <person name="Lareau L.F."/>
            <person name="Lazarevic D."/>
            <person name="Lipovich L."/>
            <person name="Liu J."/>
            <person name="Liuni S."/>
            <person name="McWilliam S."/>
            <person name="Madan Babu M."/>
            <person name="Madera M."/>
            <person name="Marchionni L."/>
            <person name="Matsuda H."/>
            <person name="Matsuzawa S."/>
            <person name="Miki H."/>
            <person name="Mignone F."/>
            <person name="Miyake S."/>
            <person name="Morris K."/>
            <person name="Mottagui-Tabar S."/>
            <person name="Mulder N."/>
            <person name="Nakano N."/>
            <person name="Nakauchi H."/>
            <person name="Ng P."/>
            <person name="Nilsson R."/>
            <person name="Nishiguchi S."/>
            <person name="Nishikawa S."/>
            <person name="Nori F."/>
            <person name="Ohara O."/>
            <person name="Okazaki Y."/>
            <person name="Orlando V."/>
            <person name="Pang K.C."/>
            <person name="Pavan W.J."/>
            <person name="Pavesi G."/>
            <person name="Pesole G."/>
            <person name="Petrovsky N."/>
            <person name="Piazza S."/>
            <person name="Reed J."/>
            <person name="Reid J.F."/>
            <person name="Ring B.Z."/>
            <person name="Ringwald M."/>
            <person name="Rost B."/>
            <person name="Ruan Y."/>
            <person name="Salzberg S.L."/>
            <person name="Sandelin A."/>
            <person name="Schneider C."/>
            <person name="Schoenbach C."/>
            <person name="Sekiguchi K."/>
            <person name="Semple C.A."/>
            <person name="Seno S."/>
            <person name="Sessa L."/>
            <person name="Sheng Y."/>
            <person name="Shibata Y."/>
            <person name="Shimada H."/>
            <person name="Shimada K."/>
            <person name="Silva D."/>
            <person name="Sinclair B."/>
            <person name="Sperling S."/>
            <person name="Stupka E."/>
            <person name="Sugiura K."/>
            <person name="Sultana R."/>
            <person name="Takenaka Y."/>
            <person name="Taki K."/>
            <person name="Tammoja K."/>
            <person name="Tan S.L."/>
            <person name="Tang S."/>
            <person name="Taylor M.S."/>
            <person name="Tegner J."/>
            <person name="Teichmann S.A."/>
            <person name="Ueda H.R."/>
            <person name="van Nimwegen E."/>
            <person name="Verardo R."/>
            <person name="Wei C.L."/>
            <person name="Yagi K."/>
            <person name="Yamanishi H."/>
            <person name="Zabarovsky E."/>
            <person name="Zhu S."/>
            <person name="Zimmer A."/>
            <person name="Hide W."/>
            <person name="Bult C."/>
            <person name="Grimmond S.M."/>
            <person name="Teasdale R.D."/>
            <person name="Liu E.T."/>
            <person name="Brusic V."/>
            <person name="Quackenbush J."/>
            <person name="Wahlestedt C."/>
            <person name="Mattick J.S."/>
            <person name="Hume D.A."/>
            <person name="Kai C."/>
            <person name="Sasaki D."/>
            <person name="Tomaru Y."/>
            <person name="Fukuda S."/>
            <person name="Kanamori-Katayama M."/>
            <person name="Suzuki M."/>
            <person name="Aoki J."/>
            <person name="Arakawa T."/>
            <person name="Iida J."/>
            <person name="Imamura K."/>
            <person name="Itoh M."/>
            <person name="Kato T."/>
            <person name="Kawaji H."/>
            <person name="Kawagashira N."/>
            <person name="Kawashima T."/>
            <person name="Kojima M."/>
            <person name="Kondo S."/>
            <person name="Konno H."/>
            <person name="Nakano K."/>
            <person name="Ninomiya N."/>
            <person name="Nishio T."/>
            <person name="Okada M."/>
            <person name="Plessy C."/>
            <person name="Shibata K."/>
            <person name="Shiraki T."/>
            <person name="Suzuki S."/>
            <person name="Tagami M."/>
            <person name="Waki K."/>
            <person name="Watahiki A."/>
            <person name="Okamura-Oho Y."/>
            <person name="Suzuki H."/>
            <person name="Kawai J."/>
            <person name="Hayashizaki Y."/>
        </authorList>
    </citation>
    <scope>NUCLEOTIDE SEQUENCE [LARGE SCALE MRNA]</scope>
    <source>
        <strain>C57BL/6J</strain>
        <strain>NOD</strain>
        <tissue>Hippocampus</tissue>
        <tissue>Thymus</tissue>
    </source>
</reference>
<reference key="4">
    <citation type="journal article" date="2004" name="Genome Res.">
        <title>The status, quality, and expansion of the NIH full-length cDNA project: the Mammalian Gene Collection (MGC).</title>
        <authorList>
            <consortium name="The MGC Project Team"/>
        </authorList>
    </citation>
    <scope>NUCLEOTIDE SEQUENCE [LARGE SCALE MRNA]</scope>
</reference>
<reference key="5">
    <citation type="journal article" date="1996" name="Cell">
        <title>Acid sphingomyelinase-deficient human lymphoblasts and mice are defective in radiation-induced apoptosis.</title>
        <authorList>
            <person name="Santana P."/>
            <person name="Pena L.A."/>
            <person name="Haimovitz-Friedman A."/>
            <person name="Martin S."/>
            <person name="Green D."/>
            <person name="McLoughlin M."/>
            <person name="Cordon-Cardo C."/>
            <person name="Schuchman E.H."/>
            <person name="Fuks Z."/>
            <person name="Kolesnick R."/>
        </authorList>
    </citation>
    <scope>FUNCTION</scope>
    <scope>CATALYTIC ACTIVITY</scope>
    <scope>DISRUPTION PHENOTYPE</scope>
</reference>
<reference key="6">
    <citation type="journal article" date="1996" name="J. Biol. Chem.">
        <title>Zn2+-stimulated sphingomyelinase is secreted by many cell types and is a product of the acid sphingomyelinase gene.</title>
        <authorList>
            <person name="Schissel S.L."/>
            <person name="Schuchman E.H."/>
            <person name="Williams K.J."/>
            <person name="Tabas I."/>
        </authorList>
    </citation>
    <scope>CATALYTIC ACTIVITY</scope>
    <scope>COFACTOR</scope>
    <scope>SUBCELLULAR LOCATION</scope>
</reference>
<reference key="7">
    <citation type="journal article" date="1998" name="J. Biol. Chem.">
        <title>The cellular trafficking and zinc dependence of secretory and lysosomal sphingomyelinase, two products of the acid sphingomyelinase gene.</title>
        <authorList>
            <person name="Schissel S.L."/>
            <person name="Keesler G.A."/>
            <person name="Schuchman E.H."/>
            <person name="Williams K.J."/>
            <person name="Tabas I."/>
        </authorList>
    </citation>
    <scope>FUNCTION</scope>
    <scope>COFACTOR</scope>
</reference>
<reference key="8">
    <citation type="journal article" date="2003" name="Nat. Med.">
        <title>Host defense against Pseudomonas aeruginosa requires ceramide-rich membrane rafts.</title>
        <authorList>
            <person name="Grassme H."/>
            <person name="Jendrossek V."/>
            <person name="Riehle A."/>
            <person name="von Kuerthy G."/>
            <person name="Berger J."/>
            <person name="Schwarz H."/>
            <person name="Weller M."/>
            <person name="Kolesnick R."/>
            <person name="Gulbins E."/>
        </authorList>
    </citation>
    <scope>FUNCTION</scope>
    <scope>DISRUPTION PHENOTYPE</scope>
</reference>
<reference key="9">
    <citation type="journal article" date="2022" name="Nature">
        <title>Caspase-7 activates ASM to repair gasdermin and perforin pores.</title>
        <authorList>
            <person name="Nozaki K."/>
            <person name="Maltez V.I."/>
            <person name="Rayamajhi M."/>
            <person name="Tubbs A.L."/>
            <person name="Mitchell J.E."/>
            <person name="Lacey C.A."/>
            <person name="Harvest C.K."/>
            <person name="Li L."/>
            <person name="Nash W.T."/>
            <person name="Larson H.N."/>
            <person name="McGlaughon B.D."/>
            <person name="Moorman N.J."/>
            <person name="Brown M.G."/>
            <person name="Whitmire J.K."/>
            <person name="Miao E.A."/>
        </authorList>
    </citation>
    <scope>FUNCTION</scope>
    <scope>CATALYTIC ACTIVITY</scope>
    <scope>SUBCELLULAR LOCATION</scope>
    <scope>PROTEOLYTIC CLEAVAGE</scope>
    <scope>MUTAGENESIS OF ASP-249</scope>
</reference>
<reference key="10">
    <citation type="journal article" date="2016" name="Nat. Commun.">
        <title>Crystal structure of mammalian acid sphingomyelinase.</title>
        <authorList>
            <person name="Gorelik A."/>
            <person name="Illes K."/>
            <person name="Heinz L.X."/>
            <person name="Superti-Furga G."/>
            <person name="Nagar B."/>
        </authorList>
    </citation>
    <scope>X-RAY CRYSTALLOGRAPHY (2.54 ANGSTROMS) OF 84-611 IN COMPLEXES WITH ZINC AND INHIBITOR</scope>
    <scope>SUBUNIT</scope>
    <scope>DISULFIDE BONDS</scope>
    <scope>GLYCOSYLATION AT ASN-84; ASN-173; ASN-333; ASN-393 AND ASN-518</scope>
    <scope>FUNCTION</scope>
    <scope>CATALYTIC ACTIVITY</scope>
    <scope>COFACTOR</scope>
    <scope>MUTAGENESIS OF VAL-128; VAL-143; HIS-280; TRP-283; HIS-317; PRO-321; PHE-388 AND LEU-391</scope>
</reference>
<evidence type="ECO:0000250" key="1">
    <source>
        <dbReference type="UniProtKB" id="P17405"/>
    </source>
</evidence>
<evidence type="ECO:0000255" key="2"/>
<evidence type="ECO:0000255" key="3">
    <source>
        <dbReference type="PROSITE-ProRule" id="PRU00415"/>
    </source>
</evidence>
<evidence type="ECO:0000269" key="4">
    <source>
    </source>
</evidence>
<evidence type="ECO:0000269" key="5">
    <source>
    </source>
</evidence>
<evidence type="ECO:0000269" key="6">
    <source>
    </source>
</evidence>
<evidence type="ECO:0000269" key="7">
    <source>
    </source>
</evidence>
<evidence type="ECO:0000269" key="8">
    <source>
    </source>
</evidence>
<evidence type="ECO:0000269" key="9">
    <source>
    </source>
</evidence>
<evidence type="ECO:0000303" key="10">
    <source>
    </source>
</evidence>
<evidence type="ECO:0000305" key="11"/>
<evidence type="ECO:0000305" key="12">
    <source>
    </source>
</evidence>
<evidence type="ECO:0000305" key="13">
    <source>
    </source>
</evidence>
<evidence type="ECO:0007744" key="14">
    <source>
        <dbReference type="PDB" id="5FI9"/>
    </source>
</evidence>
<evidence type="ECO:0007744" key="15">
    <source>
        <dbReference type="PDB" id="5FIB"/>
    </source>
</evidence>
<evidence type="ECO:0007744" key="16">
    <source>
        <dbReference type="PDB" id="5FIC"/>
    </source>
</evidence>
<evidence type="ECO:0007744" key="17">
    <source>
        <dbReference type="PDB" id="5HQN"/>
    </source>
</evidence>
<evidence type="ECO:0007829" key="18">
    <source>
        <dbReference type="PDB" id="5FI9"/>
    </source>
</evidence>
<evidence type="ECO:0007829" key="19">
    <source>
        <dbReference type="PDB" id="5FIB"/>
    </source>
</evidence>
<evidence type="ECO:0007829" key="20">
    <source>
        <dbReference type="PDB" id="5FIC"/>
    </source>
</evidence>
<evidence type="ECO:0007829" key="21">
    <source>
        <dbReference type="PDB" id="5HQN"/>
    </source>
</evidence>
<organism>
    <name type="scientific">Mus musculus</name>
    <name type="common">Mouse</name>
    <dbReference type="NCBI Taxonomy" id="10090"/>
    <lineage>
        <taxon>Eukaryota</taxon>
        <taxon>Metazoa</taxon>
        <taxon>Chordata</taxon>
        <taxon>Craniata</taxon>
        <taxon>Vertebrata</taxon>
        <taxon>Euteleostomi</taxon>
        <taxon>Mammalia</taxon>
        <taxon>Eutheria</taxon>
        <taxon>Euarchontoglires</taxon>
        <taxon>Glires</taxon>
        <taxon>Rodentia</taxon>
        <taxon>Myomorpha</taxon>
        <taxon>Muroidea</taxon>
        <taxon>Muridae</taxon>
        <taxon>Murinae</taxon>
        <taxon>Mus</taxon>
        <taxon>Mus</taxon>
    </lineage>
</organism>
<keyword id="KW-0002">3D-structure</keyword>
<keyword id="KW-1015">Disulfide bond</keyword>
<keyword id="KW-0325">Glycoprotein</keyword>
<keyword id="KW-0326">Glycosidase</keyword>
<keyword id="KW-0378">Hydrolase</keyword>
<keyword id="KW-0551">Lipid droplet</keyword>
<keyword id="KW-0443">Lipid metabolism</keyword>
<keyword id="KW-0458">Lysosome</keyword>
<keyword id="KW-0479">Metal-binding</keyword>
<keyword id="KW-0597">Phosphoprotein</keyword>
<keyword id="KW-1185">Reference proteome</keyword>
<keyword id="KW-0964">Secreted</keyword>
<keyword id="KW-0732">Signal</keyword>
<keyword id="KW-0862">Zinc</keyword>
<feature type="signal peptide" evidence="2">
    <location>
        <begin position="1"/>
        <end position="44"/>
    </location>
</feature>
<feature type="chain" id="PRO_0000002324" description="Sphingomyelin phosphodiesterase">
    <location>
        <begin position="45"/>
        <end position="627"/>
    </location>
</feature>
<feature type="chain" id="PRO_0000456685" description="Sphingomyelin phosphodiesterase, processed form" evidence="13">
    <location>
        <begin position="250"/>
        <end position="627"/>
    </location>
</feature>
<feature type="domain" description="Saposin B-type" evidence="3">
    <location>
        <begin position="83"/>
        <end position="167"/>
    </location>
</feature>
<feature type="binding site" evidence="5 14 15 16 17">
    <location>
        <position position="204"/>
    </location>
    <ligand>
        <name>Zn(2+)</name>
        <dbReference type="ChEBI" id="CHEBI:29105"/>
        <label>1</label>
    </ligand>
</feature>
<feature type="binding site" evidence="5 14 15 16 17">
    <location>
        <position position="206"/>
    </location>
    <ligand>
        <name>Zn(2+)</name>
        <dbReference type="ChEBI" id="CHEBI:29105"/>
        <label>1</label>
    </ligand>
</feature>
<feature type="binding site" evidence="5 14 15 16 17">
    <location>
        <position position="276"/>
    </location>
    <ligand>
        <name>Zn(2+)</name>
        <dbReference type="ChEBI" id="CHEBI:29105"/>
        <label>1</label>
    </ligand>
</feature>
<feature type="binding site" evidence="5 14 15 16 17">
    <location>
        <position position="276"/>
    </location>
    <ligand>
        <name>Zn(2+)</name>
        <dbReference type="ChEBI" id="CHEBI:29105"/>
        <label>2</label>
    </ligand>
</feature>
<feature type="binding site" evidence="5 14 15 16 17">
    <location>
        <position position="316"/>
    </location>
    <ligand>
        <name>Zn(2+)</name>
        <dbReference type="ChEBI" id="CHEBI:29105"/>
        <label>2</label>
    </ligand>
</feature>
<feature type="binding site" evidence="5 14 15 16 17">
    <location>
        <position position="423"/>
    </location>
    <ligand>
        <name>Zn(2+)</name>
        <dbReference type="ChEBI" id="CHEBI:29105"/>
        <label>2</label>
    </ligand>
</feature>
<feature type="binding site" evidence="5 14 15 16 17">
    <location>
        <position position="455"/>
    </location>
    <ligand>
        <name>Zn(2+)</name>
        <dbReference type="ChEBI" id="CHEBI:29105"/>
        <label>2</label>
    </ligand>
</feature>
<feature type="binding site" evidence="14 15 16 17">
    <location>
        <position position="457"/>
    </location>
    <ligand>
        <name>Zn(2+)</name>
        <dbReference type="ChEBI" id="CHEBI:29105"/>
        <label>1</label>
    </ligand>
</feature>
<feature type="site" description="Cleavage; by CASP7" evidence="13">
    <location>
        <begin position="249"/>
        <end position="250"/>
    </location>
</feature>
<feature type="modified residue" description="Phosphoserine" evidence="1">
    <location>
        <position position="506"/>
    </location>
</feature>
<feature type="glycosylation site" description="N-linked (GlcNAc...) asparagine" evidence="3 5 14 15">
    <location>
        <position position="84"/>
    </location>
</feature>
<feature type="glycosylation site" description="N-linked (GlcNAc...) asparagine" evidence="3 5 14 15 17">
    <location>
        <position position="173"/>
    </location>
</feature>
<feature type="glycosylation site" description="N-linked (GlcNAc...) asparagine" evidence="3 5 14 15 17">
    <location>
        <position position="333"/>
    </location>
</feature>
<feature type="glycosylation site" description="N-linked (GlcNAc...) asparagine" evidence="3 5 14 15 16 17">
    <location>
        <position position="393"/>
    </location>
</feature>
<feature type="glycosylation site" description="N-linked (GlcNAc...) asparagine" evidence="3 5 14 15 16 17">
    <location>
        <position position="518"/>
    </location>
</feature>
<feature type="glycosylation site" description="N-linked (GlcNAc...) asparagine" evidence="3">
    <location>
        <position position="611"/>
    </location>
</feature>
<feature type="disulfide bond" evidence="3 5 14 15 16 17">
    <location>
        <begin position="87"/>
        <end position="163"/>
    </location>
</feature>
<feature type="disulfide bond" evidence="3 5 14 15 16 17">
    <location>
        <begin position="90"/>
        <end position="155"/>
    </location>
</feature>
<feature type="disulfide bond" evidence="3 5 14 15 16 17">
    <location>
        <begin position="118"/>
        <end position="129"/>
    </location>
</feature>
<feature type="disulfide bond" evidence="3 5 14 15 16 17">
    <location>
        <begin position="219"/>
        <end position="224"/>
    </location>
</feature>
<feature type="disulfide bond" evidence="3 5 14 15 16 17">
    <location>
        <begin position="225"/>
        <end position="248"/>
    </location>
</feature>
<feature type="disulfide bond" evidence="3 5 14 15 16 17">
    <location>
        <begin position="383"/>
        <end position="429"/>
    </location>
</feature>
<feature type="disulfide bond" evidence="3 5 14 15 16 17">
    <location>
        <begin position="582"/>
        <end position="586"/>
    </location>
</feature>
<feature type="disulfide bond" evidence="3 5 14 15 16 17">
    <location>
        <begin position="592"/>
        <end position="605"/>
    </location>
</feature>
<feature type="mutagenesis site" description="Retains 20% of wild-type activity with sphingomyelin as substrate; retains 70% of wild-type activity with bis(p-nitrophenyl) phosphate as substrate." evidence="5">
    <original>V</original>
    <variation>E</variation>
    <location>
        <position position="128"/>
    </location>
</feature>
<feature type="mutagenesis site" description="Retains 10% of wild-type activity with sphingomyelin as substrate; retains 70% of wild-type activity with bis(p-nitrophenyl) phosphate as substrate." evidence="5">
    <original>V</original>
    <variation>R</variation>
    <location>
        <position position="143"/>
    </location>
</feature>
<feature type="mutagenesis site" description="Knockin mice are fertile and healthy but show increased burdens in response to bacterial infection. Cleavage by Casp7 is abolished, ceramide synthesis is decreased, leading to increased burdens in response to bacterial infection." evidence="6">
    <original>D</original>
    <variation>A</variation>
    <location>
        <position position="249"/>
    </location>
</feature>
<feature type="mutagenesis site" description="Complete loss of activity." evidence="5">
    <original>H</original>
    <variation>A</variation>
    <location>
        <position position="280"/>
    </location>
</feature>
<feature type="mutagenesis site" description="Retains 10% of wild-type activity." evidence="5">
    <original>W</original>
    <variation>N</variation>
    <location>
        <position position="283"/>
    </location>
</feature>
<feature type="mutagenesis site" description="No activity with sphingomyelin as substrate; retains 70% of wild-type activity with bis(p-nitrophenyl) phosphate as substrate." evidence="5">
    <original>H</original>
    <variation>A</variation>
    <location>
        <position position="317"/>
    </location>
</feature>
<feature type="mutagenesis site" description="Retains 10% of wild-type activity." evidence="5">
    <original>P</original>
    <variation>E</variation>
    <location>
        <position position="321"/>
    </location>
</feature>
<feature type="mutagenesis site" description="Retains 10% of wild-type activity." evidence="5">
    <original>F</original>
    <variation>R</variation>
    <location>
        <position position="388"/>
    </location>
</feature>
<feature type="mutagenesis site" description="Retains 20% of wild-type activity with sphingomyelin as substrate; retains 50% of wild-type activity with bis(p-nitrophenyl) phosphate as substrate." evidence="5">
    <original>L</original>
    <variation>R</variation>
    <location>
        <position position="391"/>
    </location>
</feature>
<feature type="sequence conflict" description="In Ref. 4; AAH11304." evidence="11" ref="4">
    <original>S</original>
    <variation>T</variation>
    <location>
        <position position="48"/>
    </location>
</feature>
<feature type="sequence conflict" description="In Ref. 4; AAH11304." evidence="11" ref="4">
    <original>G</original>
    <variation>S</variation>
    <location>
        <position position="450"/>
    </location>
</feature>
<feature type="helix" evidence="18">
    <location>
        <begin position="87"/>
        <end position="101"/>
    </location>
</feature>
<feature type="helix" evidence="18">
    <location>
        <begin position="107"/>
        <end position="121"/>
    </location>
</feature>
<feature type="helix" evidence="18">
    <location>
        <begin position="126"/>
        <end position="136"/>
    </location>
</feature>
<feature type="helix" evidence="18">
    <location>
        <begin position="140"/>
        <end position="145"/>
    </location>
</feature>
<feature type="turn" evidence="20">
    <location>
        <begin position="147"/>
        <end position="149"/>
    </location>
</feature>
<feature type="helix" evidence="18">
    <location>
        <begin position="151"/>
        <end position="159"/>
    </location>
</feature>
<feature type="turn" evidence="19">
    <location>
        <begin position="161"/>
        <end position="163"/>
    </location>
</feature>
<feature type="turn" evidence="18">
    <location>
        <begin position="166"/>
        <end position="168"/>
    </location>
</feature>
<feature type="strand" evidence="18">
    <location>
        <begin position="196"/>
        <end position="202"/>
    </location>
</feature>
<feature type="strand" evidence="18">
    <location>
        <begin position="220"/>
        <end position="223"/>
    </location>
</feature>
<feature type="strand" evidence="21">
    <location>
        <begin position="225"/>
        <end position="227"/>
    </location>
</feature>
<feature type="helix" evidence="21">
    <location>
        <begin position="235"/>
        <end position="237"/>
    </location>
</feature>
<feature type="strand" evidence="18">
    <location>
        <begin position="245"/>
        <end position="247"/>
    </location>
</feature>
<feature type="helix" evidence="18">
    <location>
        <begin position="252"/>
        <end position="260"/>
    </location>
</feature>
<feature type="helix" evidence="18">
    <location>
        <begin position="261"/>
        <end position="265"/>
    </location>
</feature>
<feature type="strand" evidence="18">
    <location>
        <begin position="269"/>
        <end position="273"/>
    </location>
</feature>
<feature type="helix" evidence="18">
    <location>
        <begin position="282"/>
        <end position="284"/>
    </location>
</feature>
<feature type="helix" evidence="18">
    <location>
        <begin position="287"/>
        <end position="305"/>
    </location>
</feature>
<feature type="strand" evidence="18">
    <location>
        <begin position="310"/>
        <end position="312"/>
    </location>
</feature>
<feature type="strand" evidence="18">
    <location>
        <begin position="316"/>
        <end position="321"/>
    </location>
</feature>
<feature type="helix" evidence="18">
    <location>
        <begin position="337"/>
        <end position="346"/>
    </location>
</feature>
<feature type="turn" evidence="18">
    <location>
        <begin position="347"/>
        <end position="350"/>
    </location>
</feature>
<feature type="helix" evidence="18">
    <location>
        <begin position="353"/>
        <end position="362"/>
    </location>
</feature>
<feature type="strand" evidence="18">
    <location>
        <begin position="365"/>
        <end position="370"/>
    </location>
</feature>
<feature type="strand" evidence="18">
    <location>
        <begin position="373"/>
        <end position="377"/>
    </location>
</feature>
<feature type="helix" evidence="18">
    <location>
        <begin position="380"/>
        <end position="383"/>
    </location>
</feature>
<feature type="helix" evidence="18">
    <location>
        <begin position="388"/>
        <end position="391"/>
    </location>
</feature>
<feature type="helix" evidence="18">
    <location>
        <begin position="397"/>
        <end position="399"/>
    </location>
</feature>
<feature type="helix" evidence="18">
    <location>
        <begin position="400"/>
        <end position="414"/>
    </location>
</feature>
<feature type="strand" evidence="18">
    <location>
        <begin position="417"/>
        <end position="421"/>
    </location>
</feature>
<feature type="helix" evidence="18">
    <location>
        <begin position="426"/>
        <end position="428"/>
    </location>
</feature>
<feature type="helix" evidence="18">
    <location>
        <begin position="431"/>
        <end position="443"/>
    </location>
</feature>
<feature type="turn" evidence="18">
    <location>
        <begin position="444"/>
        <end position="447"/>
    </location>
</feature>
<feature type="strand" evidence="18">
    <location>
        <begin position="448"/>
        <end position="453"/>
    </location>
</feature>
<feature type="strand" evidence="18">
    <location>
        <begin position="460"/>
        <end position="465"/>
    </location>
</feature>
<feature type="turn" evidence="18">
    <location>
        <begin position="467"/>
        <end position="469"/>
    </location>
</feature>
<feature type="strand" evidence="18">
    <location>
        <begin position="472"/>
        <end position="479"/>
    </location>
</feature>
<feature type="turn" evidence="18">
    <location>
        <begin position="486"/>
        <end position="488"/>
    </location>
</feature>
<feature type="strand" evidence="18">
    <location>
        <begin position="492"/>
        <end position="499"/>
    </location>
</feature>
<feature type="strand" evidence="18">
    <location>
        <begin position="509"/>
        <end position="517"/>
    </location>
</feature>
<feature type="helix" evidence="18">
    <location>
        <begin position="519"/>
        <end position="522"/>
    </location>
</feature>
<feature type="strand" evidence="18">
    <location>
        <begin position="531"/>
        <end position="536"/>
    </location>
</feature>
<feature type="helix" evidence="18">
    <location>
        <begin position="537"/>
        <end position="541"/>
    </location>
</feature>
<feature type="helix" evidence="18">
    <location>
        <begin position="548"/>
        <end position="560"/>
    </location>
</feature>
<feature type="helix" evidence="18">
    <location>
        <begin position="562"/>
        <end position="572"/>
    </location>
</feature>
<feature type="turn" evidence="21">
    <location>
        <begin position="573"/>
        <end position="575"/>
    </location>
</feature>
<feature type="helix" evidence="18">
    <location>
        <begin position="584"/>
        <end position="594"/>
    </location>
</feature>
<feature type="strand" evidence="18">
    <location>
        <begin position="598"/>
        <end position="600"/>
    </location>
</feature>
<feature type="helix" evidence="18">
    <location>
        <begin position="602"/>
        <end position="605"/>
    </location>
</feature>
<feature type="turn" evidence="19">
    <location>
        <begin position="606"/>
        <end position="608"/>
    </location>
</feature>
<sequence>MPHHRASSGQDHLRAGWEQRLERSLPAPRVGLLWMGLGLALVLALFDSTVLWVPARAYPLPSEGHSVKFSAIAPPLQSAFGWQNLTCPACKVLFTALNHGLKKEPNVARVGSVAIKICKMLNIAPLDVCQSAVHLFEDDVVEVWTRSVLSPSEACGLLLGSSCGHWDIFSTWNISLPSVPKPPPKPPSPPAPGAPVSRVLFLTDLHWDHEYLEGTDPYCADPLCCRRGSGWPPNSQKGAGFWGEYSKCDLPLRTLESLLKGLGPAGPFEMVYWTGDIPAHDVWQQSRQDQLRALTTITDLVRKFLGPVPVYPAVGNHESTPVNGFPPPFIKGNQSSQWLYEAMAKAWEPWLPADALHTLRIGGFYALTPRPGLRLISLNMNFCSRENFWLLINSTDPAGQLQWLVEELQAAENRGDKVHIIGHIPPGHCLKSWSWNYYKIIARYENTLAGQFFGHTHVDEFEIFYDEETLSRPLAVAFLAPSATTFINLNPGYRVYQIDGNYPGSSHVVLDHETYILNLTQANAAGGTPSWKRLYRARETYGLPDAMPASWHNLVYRMRDDEQLFQTFWFLYHKGHPPSEPCGTPCRLATLCAQLSARADSPALCRHLMPNGSLPDANRLWSRPLLC</sequence>
<gene>
    <name evidence="10" type="primary">Smpd1</name>
    <name evidence="10" type="synonym">Asm</name>
</gene>